<keyword id="KW-0406">Ion transport</keyword>
<keyword id="KW-0472">Membrane</keyword>
<keyword id="KW-1185">Reference proteome</keyword>
<keyword id="KW-0812">Transmembrane</keyword>
<keyword id="KW-1133">Transmembrane helix</keyword>
<keyword id="KW-0813">Transport</keyword>
<comment type="function">
    <text evidence="4">Probable cation transporter. May be involved in regulation of potassium-sodium homeostasis.</text>
</comment>
<comment type="subcellular location">
    <subcellularLocation>
        <location evidence="1">Membrane</location>
        <topology evidence="1">Multi-pass membrane protein</topology>
    </subcellularLocation>
</comment>
<comment type="domain">
    <text evidence="4">HKT transporters are proposed to contain 4 pore-forming regions enclosed by transmembrane segments with each containing a potassium channel-like selectivity filter motif.</text>
</comment>
<comment type="similarity">
    <text evidence="4">Belongs to the TrkH potassium transport family. HKT (TC 2.A.38.3) subfamily.</text>
</comment>
<feature type="chain" id="PRO_0000070468" description="Probable cation transporter HKT2;3">
    <location>
        <begin position="1"/>
        <end position="509"/>
    </location>
</feature>
<feature type="topological domain" description="Cytoplasmic" evidence="1">
    <location>
        <begin position="1"/>
        <end position="32"/>
    </location>
</feature>
<feature type="transmembrane region" description="Helical; Name=1" evidence="1">
    <location>
        <begin position="33"/>
        <end position="53"/>
    </location>
</feature>
<feature type="transmembrane region" description="Helical; Name=2" evidence="1">
    <location>
        <begin position="96"/>
        <end position="116"/>
    </location>
</feature>
<feature type="topological domain" description="Cytoplasmic" evidence="1">
    <location>
        <begin position="117"/>
        <end position="164"/>
    </location>
</feature>
<feature type="transmembrane region" description="Helical; Name=3" evidence="1">
    <location>
        <begin position="165"/>
        <end position="185"/>
    </location>
</feature>
<feature type="transmembrane region" description="Helical; Name=4" evidence="1">
    <location>
        <begin position="237"/>
        <end position="257"/>
    </location>
</feature>
<feature type="topological domain" description="Cytoplasmic" evidence="1">
    <location>
        <begin position="258"/>
        <end position="296"/>
    </location>
</feature>
<feature type="transmembrane region" description="Helical; Name=5" evidence="1">
    <location>
        <begin position="297"/>
        <end position="317"/>
    </location>
</feature>
<feature type="transmembrane region" description="Helical; Name=6" evidence="1">
    <location>
        <begin position="353"/>
        <end position="373"/>
    </location>
</feature>
<feature type="topological domain" description="Cytoplasmic" evidence="1">
    <location>
        <begin position="374"/>
        <end position="400"/>
    </location>
</feature>
<feature type="transmembrane region" description="Helical; Name=7" evidence="1">
    <location>
        <begin position="401"/>
        <end position="421"/>
    </location>
</feature>
<feature type="transmembrane region" description="Helical; Name=8" evidence="1">
    <location>
        <begin position="474"/>
        <end position="494"/>
    </location>
</feature>
<feature type="topological domain" description="Cytoplasmic" evidence="1">
    <location>
        <begin position="495"/>
        <end position="509"/>
    </location>
</feature>
<reference key="1">
    <citation type="journal article" date="2003" name="Plant J.">
        <title>Sodium transport and HKT transporters: the rice model.</title>
        <authorList>
            <person name="Garciadeblas B."/>
            <person name="Senn M.E."/>
            <person name="Banuelos M.A."/>
            <person name="Rodriguez-Navarro A."/>
        </authorList>
    </citation>
    <scope>NUCLEOTIDE SEQUENCE [GENOMIC DNA / MRNA]</scope>
    <scope>NOMENCLATURE</scope>
    <source>
        <strain>cv. Nipponbare</strain>
        <tissue>Shoot</tissue>
    </source>
</reference>
<reference key="2">
    <citation type="journal article" date="2002" name="Nature">
        <title>The genome sequence and structure of rice chromosome 1.</title>
        <authorList>
            <person name="Sasaki T."/>
            <person name="Matsumoto T."/>
            <person name="Yamamoto K."/>
            <person name="Sakata K."/>
            <person name="Baba T."/>
            <person name="Katayose Y."/>
            <person name="Wu J."/>
            <person name="Niimura Y."/>
            <person name="Cheng Z."/>
            <person name="Nagamura Y."/>
            <person name="Antonio B.A."/>
            <person name="Kanamori H."/>
            <person name="Hosokawa S."/>
            <person name="Masukawa M."/>
            <person name="Arikawa K."/>
            <person name="Chiden Y."/>
            <person name="Hayashi M."/>
            <person name="Okamoto M."/>
            <person name="Ando T."/>
            <person name="Aoki H."/>
            <person name="Arita K."/>
            <person name="Hamada M."/>
            <person name="Harada C."/>
            <person name="Hijishita S."/>
            <person name="Honda M."/>
            <person name="Ichikawa Y."/>
            <person name="Idonuma A."/>
            <person name="Iijima M."/>
            <person name="Ikeda M."/>
            <person name="Ikeno M."/>
            <person name="Ito S."/>
            <person name="Ito T."/>
            <person name="Ito Y."/>
            <person name="Ito Y."/>
            <person name="Iwabuchi A."/>
            <person name="Kamiya K."/>
            <person name="Karasawa W."/>
            <person name="Katagiri S."/>
            <person name="Kikuta A."/>
            <person name="Kobayashi N."/>
            <person name="Kono I."/>
            <person name="Machita K."/>
            <person name="Maehara T."/>
            <person name="Mizuno H."/>
            <person name="Mizubayashi T."/>
            <person name="Mukai Y."/>
            <person name="Nagasaki H."/>
            <person name="Nakashima M."/>
            <person name="Nakama Y."/>
            <person name="Nakamichi Y."/>
            <person name="Nakamura M."/>
            <person name="Namiki N."/>
            <person name="Negishi M."/>
            <person name="Ohta I."/>
            <person name="Ono N."/>
            <person name="Saji S."/>
            <person name="Sakai K."/>
            <person name="Shibata M."/>
            <person name="Shimokawa T."/>
            <person name="Shomura A."/>
            <person name="Song J."/>
            <person name="Takazaki Y."/>
            <person name="Terasawa K."/>
            <person name="Tsuji K."/>
            <person name="Waki K."/>
            <person name="Yamagata H."/>
            <person name="Yamane H."/>
            <person name="Yoshiki S."/>
            <person name="Yoshihara R."/>
            <person name="Yukawa K."/>
            <person name="Zhong H."/>
            <person name="Iwama H."/>
            <person name="Endo T."/>
            <person name="Ito H."/>
            <person name="Hahn J.H."/>
            <person name="Kim H.-I."/>
            <person name="Eun M.-Y."/>
            <person name="Yano M."/>
            <person name="Jiang J."/>
            <person name="Gojobori T."/>
        </authorList>
    </citation>
    <scope>NUCLEOTIDE SEQUENCE [LARGE SCALE GENOMIC DNA]</scope>
    <source>
        <strain>cv. Nipponbare</strain>
    </source>
</reference>
<reference key="3">
    <citation type="journal article" date="2005" name="Nature">
        <title>The map-based sequence of the rice genome.</title>
        <authorList>
            <consortium name="International rice genome sequencing project (IRGSP)"/>
        </authorList>
    </citation>
    <scope>NUCLEOTIDE SEQUENCE [LARGE SCALE GENOMIC DNA]</scope>
    <source>
        <strain>cv. Nipponbare</strain>
    </source>
</reference>
<reference key="4">
    <citation type="journal article" date="2008" name="Nucleic Acids Res.">
        <title>The rice annotation project database (RAP-DB): 2008 update.</title>
        <authorList>
            <consortium name="The rice annotation project (RAP)"/>
        </authorList>
    </citation>
    <scope>GENOME REANNOTATION</scope>
    <source>
        <strain>cv. Nipponbare</strain>
    </source>
</reference>
<reference key="5">
    <citation type="journal article" date="2013" name="Rice">
        <title>Improvement of the Oryza sativa Nipponbare reference genome using next generation sequence and optical map data.</title>
        <authorList>
            <person name="Kawahara Y."/>
            <person name="de la Bastide M."/>
            <person name="Hamilton J.P."/>
            <person name="Kanamori H."/>
            <person name="McCombie W.R."/>
            <person name="Ouyang S."/>
            <person name="Schwartz D.C."/>
            <person name="Tanaka T."/>
            <person name="Wu J."/>
            <person name="Zhou S."/>
            <person name="Childs K.L."/>
            <person name="Davidson R.M."/>
            <person name="Lin H."/>
            <person name="Quesada-Ocampo L."/>
            <person name="Vaillancourt B."/>
            <person name="Sakai H."/>
            <person name="Lee S.S."/>
            <person name="Kim J."/>
            <person name="Numa H."/>
            <person name="Itoh T."/>
            <person name="Buell C.R."/>
            <person name="Matsumoto T."/>
        </authorList>
    </citation>
    <scope>GENOME REANNOTATION</scope>
    <source>
        <strain>cv. Nipponbare</strain>
    </source>
</reference>
<reference key="6">
    <citation type="journal article" date="2006" name="Trends Plant Sci.">
        <title>Nomenclature for HKT transporters, key determinants of plant salinity tolerance.</title>
        <authorList>
            <person name="Platten J.D."/>
            <person name="Cotsaftis O."/>
            <person name="Berthomieu P."/>
            <person name="Bohnert H."/>
            <person name="Davenport R.J."/>
            <person name="Fairbairn D.J."/>
            <person name="Horie T."/>
            <person name="Leigh R.A."/>
            <person name="Lin H.X."/>
            <person name="Luan S."/>
            <person name="Maeser P."/>
            <person name="Pantoja O."/>
            <person name="Rodriguez-Navarro A."/>
            <person name="Schachtman D.P."/>
            <person name="Schroeder J.I."/>
            <person name="Sentenac H."/>
            <person name="Uozumi N."/>
            <person name="Very A.A."/>
            <person name="Zhu J.K."/>
            <person name="Dennis E.S."/>
            <person name="Tester M."/>
        </authorList>
    </citation>
    <scope>GENE FAMILY</scope>
    <scope>NOMENCLATURE</scope>
</reference>
<protein>
    <recommendedName>
        <fullName evidence="3">Probable cation transporter HKT2;3</fullName>
        <shortName evidence="3">OsHKT2;3</shortName>
    </recommendedName>
    <alternativeName>
        <fullName evidence="2">Probable cation transporter HKT3</fullName>
        <shortName evidence="2">OsHKT3</shortName>
    </alternativeName>
</protein>
<proteinExistence type="evidence at transcript level"/>
<organism>
    <name type="scientific">Oryza sativa subsp. japonica</name>
    <name type="common">Rice</name>
    <dbReference type="NCBI Taxonomy" id="39947"/>
    <lineage>
        <taxon>Eukaryota</taxon>
        <taxon>Viridiplantae</taxon>
        <taxon>Streptophyta</taxon>
        <taxon>Embryophyta</taxon>
        <taxon>Tracheophyta</taxon>
        <taxon>Spermatophyta</taxon>
        <taxon>Magnoliopsida</taxon>
        <taxon>Liliopsida</taxon>
        <taxon>Poales</taxon>
        <taxon>Poaceae</taxon>
        <taxon>BOP clade</taxon>
        <taxon>Oryzoideae</taxon>
        <taxon>Oryzeae</taxon>
        <taxon>Oryzinae</taxon>
        <taxon>Oryza</taxon>
        <taxon>Oryza sativa</taxon>
    </lineage>
</organism>
<accession>Q8L481</accession>
<accession>Q0JM66</accession>
<sequence>MPIRLHIFVNSARHAINSSAFICRFIAYHLSPLLIHLSYFLIIDILGFVSLVVLRPSNHKYNPRYVDMFFLSTSAVTVIGLATIQMEDLSSSQIAILTLLMFLDSKMFLSFLGLVLESSKQNKHDPENRRVSSVTVCKQSQLEEATPQTPSMNSIDIKKRCLKYLVFVVLAYMIIILVTGSLLVFMYIAHVSSARDVLTRKSINKALFSISVTVSSFTNGGLLPTNESMVVFSSNNGLLLLLIGQILAGSTLFPVFLRLVIWALRGLRLAKAEEPDFMMNNSSAVGFSHLLPNLQTIFLAVVEVAFVAMTVILFCCLNWDSVVFAGLSSLQKITNALFMAVNARQAGENSIDCSLVAPAALVLFMVMMYTPSLTKLFSACQDHKRIGPESDDRTSKGKPFLKMMAFSPLGFNTTVIMLVCITERRSLSTDPLNLSTFNIIFEVISAYGNIGLSTGYSCSRQLQHQEGIACHEKAYNFSGWWSEPGKLILVLAMLCGRLNSKDSTSARTR</sequence>
<evidence type="ECO:0000255" key="1"/>
<evidence type="ECO:0000303" key="2">
    <source>
    </source>
</evidence>
<evidence type="ECO:0000303" key="3">
    <source>
    </source>
</evidence>
<evidence type="ECO:0000305" key="4"/>
<evidence type="ECO:0000312" key="5">
    <source>
        <dbReference type="EMBL" id="BAD87687.1"/>
    </source>
</evidence>
<evidence type="ECO:0000312" key="6">
    <source>
        <dbReference type="EMBL" id="BAS72520.1"/>
    </source>
</evidence>
<name>HKT23_ORYSJ</name>
<gene>
    <name evidence="3" type="primary">HKT2;3</name>
    <name evidence="2" type="synonym">HKT3</name>
    <name evidence="6" type="ordered locus">Os01g0532600</name>
    <name evidence="4" type="ordered locus">LOC_Os01g34850</name>
    <name evidence="5" type="ORF">OJ1619_F12.15</name>
</gene>
<dbReference type="EMBL" id="AJ491819">
    <property type="protein sequence ID" value="CAD37186.1"/>
    <property type="molecule type" value="Genomic_DNA"/>
</dbReference>
<dbReference type="EMBL" id="AJ491820">
    <property type="protein sequence ID" value="CAD37187.1"/>
    <property type="molecule type" value="mRNA"/>
</dbReference>
<dbReference type="EMBL" id="AP003447">
    <property type="protein sequence ID" value="BAD87687.1"/>
    <property type="molecule type" value="Genomic_DNA"/>
</dbReference>
<dbReference type="EMBL" id="AP008207">
    <property type="protein sequence ID" value="BAF05162.1"/>
    <property type="molecule type" value="Genomic_DNA"/>
</dbReference>
<dbReference type="EMBL" id="AP014957">
    <property type="protein sequence ID" value="BAS72520.1"/>
    <property type="molecule type" value="Genomic_DNA"/>
</dbReference>
<dbReference type="RefSeq" id="NP_001388656.1">
    <property type="nucleotide sequence ID" value="NM_001401727.1"/>
</dbReference>
<dbReference type="RefSeq" id="XP_015632753.1">
    <property type="nucleotide sequence ID" value="XM_015777267.1"/>
</dbReference>
<dbReference type="SMR" id="Q8L481"/>
<dbReference type="BioGRID" id="796841">
    <property type="interactions" value="1"/>
</dbReference>
<dbReference type="FunCoup" id="Q8L481">
    <property type="interactions" value="6"/>
</dbReference>
<dbReference type="STRING" id="39947.Q8L481"/>
<dbReference type="PaxDb" id="39947-Q8L481"/>
<dbReference type="EnsemblPlants" id="Os01t0532600-00">
    <property type="protein sequence ID" value="Os01t0532600-00"/>
    <property type="gene ID" value="Os01g0532600"/>
</dbReference>
<dbReference type="GeneID" id="4327804"/>
<dbReference type="Gramene" id="Os01t0532600-00">
    <property type="protein sequence ID" value="Os01t0532600-00"/>
    <property type="gene ID" value="Os01g0532600"/>
</dbReference>
<dbReference type="KEGG" id="dosa:Os01g0532600"/>
<dbReference type="eggNOG" id="KOG1341">
    <property type="taxonomic scope" value="Eukaryota"/>
</dbReference>
<dbReference type="HOGENOM" id="CLU_008384_2_0_1"/>
<dbReference type="InParanoid" id="Q8L481"/>
<dbReference type="OMA" id="CITERHA"/>
<dbReference type="OrthoDB" id="9999863at2759"/>
<dbReference type="Proteomes" id="UP000000763">
    <property type="component" value="Chromosome 1"/>
</dbReference>
<dbReference type="Proteomes" id="UP000059680">
    <property type="component" value="Chromosome 1"/>
</dbReference>
<dbReference type="GO" id="GO:0005886">
    <property type="term" value="C:plasma membrane"/>
    <property type="evidence" value="ECO:0000318"/>
    <property type="project" value="GO_Central"/>
</dbReference>
<dbReference type="GO" id="GO:0008324">
    <property type="term" value="F:monoatomic cation transmembrane transporter activity"/>
    <property type="evidence" value="ECO:0000318"/>
    <property type="project" value="GO_Central"/>
</dbReference>
<dbReference type="GO" id="GO:0098662">
    <property type="term" value="P:inorganic cation transmembrane transport"/>
    <property type="evidence" value="ECO:0007669"/>
    <property type="project" value="UniProtKB-ARBA"/>
</dbReference>
<dbReference type="GO" id="GO:0030001">
    <property type="term" value="P:metal ion transport"/>
    <property type="evidence" value="ECO:0007669"/>
    <property type="project" value="UniProtKB-ARBA"/>
</dbReference>
<dbReference type="InterPro" id="IPR003445">
    <property type="entry name" value="Cat_transpt"/>
</dbReference>
<dbReference type="InterPro" id="IPR051143">
    <property type="entry name" value="TrkH_K-transport"/>
</dbReference>
<dbReference type="PANTHER" id="PTHR31064:SF11">
    <property type="entry name" value="CATION TRANSPORTER HKT2_3-RELATED"/>
    <property type="match status" value="1"/>
</dbReference>
<dbReference type="PANTHER" id="PTHR31064">
    <property type="entry name" value="POTASSIUM TRANSPORT PROTEIN DDB_G0292412-RELATED"/>
    <property type="match status" value="1"/>
</dbReference>
<dbReference type="Pfam" id="PF02386">
    <property type="entry name" value="TrkH"/>
    <property type="match status" value="2"/>
</dbReference>